<keyword id="KW-0010">Activator</keyword>
<keyword id="KW-0963">Cytoplasm</keyword>
<keyword id="KW-0238">DNA-binding</keyword>
<keyword id="KW-0341">Growth regulation</keyword>
<keyword id="KW-0597">Phosphoprotein</keyword>
<keyword id="KW-0678">Repressor</keyword>
<keyword id="KW-0804">Transcription</keyword>
<keyword id="KW-0805">Transcription regulation</keyword>
<keyword id="KW-0902">Two-component regulatory system</keyword>
<keyword id="KW-0843">Virulence</keyword>
<accession>D0ZV90</accession>
<gene>
    <name type="primary">phoP</name>
    <name type="ordered locus">STM14_1409</name>
</gene>
<proteinExistence type="evidence at protein level"/>
<organism>
    <name type="scientific">Salmonella typhimurium (strain 14028s / SGSC 2262)</name>
    <dbReference type="NCBI Taxonomy" id="588858"/>
    <lineage>
        <taxon>Bacteria</taxon>
        <taxon>Pseudomonadati</taxon>
        <taxon>Pseudomonadota</taxon>
        <taxon>Gammaproteobacteria</taxon>
        <taxon>Enterobacterales</taxon>
        <taxon>Enterobacteriaceae</taxon>
        <taxon>Salmonella</taxon>
    </lineage>
</organism>
<feature type="chain" id="PRO_0000424530" description="Virulence transcriptional regulatory protein PhoP">
    <location>
        <begin position="1"/>
        <end position="224"/>
    </location>
</feature>
<feature type="domain" description="Response regulatory" evidence="2">
    <location>
        <begin position="3"/>
        <end position="117"/>
    </location>
</feature>
<feature type="DNA-binding region" description="OmpR/PhoB-type" evidence="3">
    <location>
        <begin position="125"/>
        <end position="223"/>
    </location>
</feature>
<feature type="modified residue" description="4-aspartylphosphate" evidence="2">
    <location>
        <position position="52"/>
    </location>
</feature>
<reference key="1">
    <citation type="journal article" date="2010" name="J. Bacteriol.">
        <title>Short-term signatures of evolutionary change in the Salmonella enterica serovar typhimurium 14028 genome.</title>
        <authorList>
            <person name="Jarvik T."/>
            <person name="Smillie C."/>
            <person name="Groisman E.A."/>
            <person name="Ochman H."/>
        </authorList>
    </citation>
    <scope>NUCLEOTIDE SEQUENCE [LARGE SCALE GENOMIC DNA]</scope>
    <source>
        <strain>14028s / SGSC 2262</strain>
    </source>
</reference>
<reference key="2">
    <citation type="journal article" date="1993" name="J. Bacteriol.">
        <title>A PhoP-repressed gene promotes Salmonella typhimurium invasion of epithelial cells.</title>
        <authorList>
            <person name="Behlau I."/>
            <person name="Miller S.I."/>
        </authorList>
    </citation>
    <scope>FUNCTION</scope>
    <source>
        <strain>14028s / SGSC 2262</strain>
    </source>
</reference>
<reference key="3">
    <citation type="journal article" date="1995" name="J. Bacteriol.">
        <title>Transcriptional autoregulation of the Salmonella typhimurium phoPQ operon.</title>
        <authorList>
            <person name="Soncini F.C."/>
            <person name="Garcia Vescovi E."/>
            <person name="Groisman E.A."/>
        </authorList>
    </citation>
    <scope>AUTOREGULATION</scope>
    <source>
        <strain>14028s / SGSC 2262</strain>
    </source>
</reference>
<reference key="4">
    <citation type="journal article" date="1996" name="Cell">
        <title>Mg2+ as an extracellular signal: environmental regulation of Salmonella virulence.</title>
        <authorList>
            <person name="Garcia Vescovi E."/>
            <person name="Soncini F.C."/>
            <person name="Groisman E.A."/>
        </authorList>
    </citation>
    <scope>REGULATION BY MG(2+)</scope>
    <source>
        <strain>14028s / SGSC 2262</strain>
    </source>
</reference>
<reference key="5">
    <citation type="journal article" date="1999" name="Infect. Immun.">
        <title>PhoP-PhoQ-regulated loci are required for enhanced bile resistance in Salmonella spp.</title>
        <authorList>
            <person name="van Velkinburgh J.C."/>
            <person name="Gunn J.S."/>
        </authorList>
    </citation>
    <scope>FUNCTION</scope>
    <source>
        <strain>14028s / SGSC 2262</strain>
    </source>
</reference>
<reference key="6">
    <citation type="journal article" date="2000" name="EMBO J.">
        <title>A small protein that mediates the activation of a two-component system by another two-component system.</title>
        <authorList>
            <person name="Kox L.F.F."/>
            <person name="Woesten M.M.S.M."/>
            <person name="Groisman E.A."/>
        </authorList>
    </citation>
    <scope>FUNCTION</scope>
    <source>
        <strain>14028s / SGSC 2262</strain>
    </source>
</reference>
<reference key="7">
    <citation type="journal article" date="2003" name="Mol. Microbiol.">
        <title>Regulation of Salmonella typhimurium virulence gene expression by cationic antimicrobial peptides.</title>
        <authorList>
            <person name="Bader M.W."/>
            <person name="Navarre W.W."/>
            <person name="Shiau W."/>
            <person name="Nikaido H."/>
            <person name="Frye J.G."/>
            <person name="McClelland M."/>
            <person name="Fang F.C."/>
            <person name="Miller S.I."/>
        </authorList>
    </citation>
    <scope>FUNCTION</scope>
    <scope>INDUCTION BY CATIONIC ANTIMICROBIAL PEPTIDES (CAMP)</scope>
    <source>
        <strain>14028s / SGSC 2262</strain>
    </source>
</reference>
<reference key="8">
    <citation type="journal article" date="2005" name="Cell">
        <title>Recognition of antimicrobial peptides by a bacterial sensor kinase.</title>
        <authorList>
            <person name="Bader M.W."/>
            <person name="Sanowar S."/>
            <person name="Daley M.E."/>
            <person name="Schneider A.R."/>
            <person name="Cho U."/>
            <person name="Xu W."/>
            <person name="Klevit R.E."/>
            <person name="Le Moual H."/>
            <person name="Miller S.I."/>
        </authorList>
    </citation>
    <scope>INDUCTION</scope>
    <scope>PHOSPHORYLATION BY PHOQ</scope>
    <source>
        <strain>14028s / SGSC 2262</strain>
    </source>
</reference>
<reference key="9">
    <citation type="journal article" date="2005" name="Mol. Microbiol.">
        <title>The PhoP/PhoQ system controls the intramacrophage type three secretion system of Salmonella enterica.</title>
        <authorList>
            <person name="Bijlsma J.J.E."/>
            <person name="Groisman E.A."/>
        </authorList>
    </citation>
    <scope>FUNCTION</scope>
    <source>
        <strain>14028s / SGSC 2262</strain>
    </source>
</reference>
<evidence type="ECO:0000250" key="1"/>
<evidence type="ECO:0000255" key="2">
    <source>
        <dbReference type="PROSITE-ProRule" id="PRU00169"/>
    </source>
</evidence>
<evidence type="ECO:0000255" key="3">
    <source>
        <dbReference type="PROSITE-ProRule" id="PRU01091"/>
    </source>
</evidence>
<evidence type="ECO:0000269" key="4">
    <source>
    </source>
</evidence>
<evidence type="ECO:0000269" key="5">
    <source>
    </source>
</evidence>
<evidence type="ECO:0000269" key="6">
    <source>
    </source>
</evidence>
<evidence type="ECO:0000269" key="7">
    <source>
    </source>
</evidence>
<evidence type="ECO:0000269" key="8">
    <source>
    </source>
</evidence>
<evidence type="ECO:0000269" key="9">
    <source>
    </source>
</evidence>
<evidence type="ECO:0000305" key="10"/>
<sequence>MMRVLVVEDNALLRHHLKVQLQDSGHQVDAAEDAREADYYLNEHLPDIAIVDLGLPDEDGLSLIRRWRSSDVSLPVLVLTAREGWQDKVEVLSSGADDYVTKPFHIEEVMARMQALMRRNSGLASQVINIPPFQVDLSRRELSVNEEVIKLTAFEYTIMETLIRNNGKVVSKDSLMLQLYPDAELRESHTIDVLMGRLRKKIQAQYPHDVITTVRGQGYLFELR</sequence>
<dbReference type="EMBL" id="CP001363">
    <property type="protein sequence ID" value="ACY87895.1"/>
    <property type="molecule type" value="Genomic_DNA"/>
</dbReference>
<dbReference type="SMR" id="D0ZV90"/>
<dbReference type="IntAct" id="D0ZV90">
    <property type="interactions" value="1"/>
</dbReference>
<dbReference type="KEGG" id="seo:STM14_1409"/>
<dbReference type="PATRIC" id="fig|588858.6.peg.1379"/>
<dbReference type="HOGENOM" id="CLU_000445_30_1_6"/>
<dbReference type="BioCyc" id="SENT588858:STM14_RS06665-MONOMER"/>
<dbReference type="PHI-base" id="PHI:123535"/>
<dbReference type="PHI-base" id="PHI:6110"/>
<dbReference type="PHI-base" id="PHI:9437"/>
<dbReference type="Proteomes" id="UP000002695">
    <property type="component" value="Chromosome"/>
</dbReference>
<dbReference type="GO" id="GO:0005829">
    <property type="term" value="C:cytosol"/>
    <property type="evidence" value="ECO:0007669"/>
    <property type="project" value="TreeGrafter"/>
</dbReference>
<dbReference type="GO" id="GO:0032993">
    <property type="term" value="C:protein-DNA complex"/>
    <property type="evidence" value="ECO:0007669"/>
    <property type="project" value="TreeGrafter"/>
</dbReference>
<dbReference type="GO" id="GO:0000156">
    <property type="term" value="F:phosphorelay response regulator activity"/>
    <property type="evidence" value="ECO:0007669"/>
    <property type="project" value="TreeGrafter"/>
</dbReference>
<dbReference type="GO" id="GO:0000976">
    <property type="term" value="F:transcription cis-regulatory region binding"/>
    <property type="evidence" value="ECO:0007669"/>
    <property type="project" value="TreeGrafter"/>
</dbReference>
<dbReference type="GO" id="GO:0006355">
    <property type="term" value="P:regulation of DNA-templated transcription"/>
    <property type="evidence" value="ECO:0007669"/>
    <property type="project" value="InterPro"/>
</dbReference>
<dbReference type="CDD" id="cd19934">
    <property type="entry name" value="REC_OmpR_EcPhoP-like"/>
    <property type="match status" value="1"/>
</dbReference>
<dbReference type="CDD" id="cd00383">
    <property type="entry name" value="trans_reg_C"/>
    <property type="match status" value="1"/>
</dbReference>
<dbReference type="FunFam" id="3.40.50.2300:FF:000002">
    <property type="entry name" value="DNA-binding response regulator PhoP"/>
    <property type="match status" value="1"/>
</dbReference>
<dbReference type="FunFam" id="1.10.10.10:FF:000098">
    <property type="entry name" value="Two-component system response regulator PhoP"/>
    <property type="match status" value="1"/>
</dbReference>
<dbReference type="Gene3D" id="3.40.50.2300">
    <property type="match status" value="1"/>
</dbReference>
<dbReference type="Gene3D" id="6.10.250.690">
    <property type="match status" value="1"/>
</dbReference>
<dbReference type="Gene3D" id="1.10.10.10">
    <property type="entry name" value="Winged helix-like DNA-binding domain superfamily/Winged helix DNA-binding domain"/>
    <property type="match status" value="1"/>
</dbReference>
<dbReference type="InterPro" id="IPR011006">
    <property type="entry name" value="CheY-like_superfamily"/>
</dbReference>
<dbReference type="InterPro" id="IPR001867">
    <property type="entry name" value="OmpR/PhoB-type_DNA-bd"/>
</dbReference>
<dbReference type="InterPro" id="IPR001789">
    <property type="entry name" value="Sig_transdc_resp-reg_receiver"/>
</dbReference>
<dbReference type="InterPro" id="IPR039420">
    <property type="entry name" value="WalR-like"/>
</dbReference>
<dbReference type="InterPro" id="IPR036388">
    <property type="entry name" value="WH-like_DNA-bd_sf"/>
</dbReference>
<dbReference type="NCBIfam" id="NF008078">
    <property type="entry name" value="PRK10816.1"/>
    <property type="match status" value="1"/>
</dbReference>
<dbReference type="PANTHER" id="PTHR48111">
    <property type="entry name" value="REGULATOR OF RPOS"/>
    <property type="match status" value="1"/>
</dbReference>
<dbReference type="PANTHER" id="PTHR48111:SF71">
    <property type="entry name" value="TRANSCRIPTIONAL REGULATORY PROTEIN PHOP"/>
    <property type="match status" value="1"/>
</dbReference>
<dbReference type="Pfam" id="PF00072">
    <property type="entry name" value="Response_reg"/>
    <property type="match status" value="1"/>
</dbReference>
<dbReference type="Pfam" id="PF00486">
    <property type="entry name" value="Trans_reg_C"/>
    <property type="match status" value="1"/>
</dbReference>
<dbReference type="SMART" id="SM00448">
    <property type="entry name" value="REC"/>
    <property type="match status" value="1"/>
</dbReference>
<dbReference type="SMART" id="SM00862">
    <property type="entry name" value="Trans_reg_C"/>
    <property type="match status" value="1"/>
</dbReference>
<dbReference type="SUPFAM" id="SSF52172">
    <property type="entry name" value="CheY-like"/>
    <property type="match status" value="1"/>
</dbReference>
<dbReference type="PROSITE" id="PS51755">
    <property type="entry name" value="OMPR_PHOB"/>
    <property type="match status" value="1"/>
</dbReference>
<dbReference type="PROSITE" id="PS50110">
    <property type="entry name" value="RESPONSE_REGULATORY"/>
    <property type="match status" value="1"/>
</dbReference>
<name>PHOP_SALT1</name>
<comment type="function">
    <text evidence="4 5 6 7 9">Member of the two-component regulatory system PhoP/PhoQ which regulates the expression of genes involved in virulence, adaptation to acidic and low Mg(2+) environments and resistance to host defense antimicrobial peptides. Essential for intramacrophage survival of S.typhimurium. In low periplasmic Mg(2+), PhoQ phosphorylates PhoP, resulting in the expression of PhoP-activated genes (PAG) and repression of PhoP-repressed genes (PRG). In high periplasmic Mg(2+), PhoQ dephosphorylates phospho-PhoP, resulting in the repression of PAG and may lead to expression of some PRG. Essential for transcription of spiC inside macrophages by controlling the expression of the two-component regulatory system SsrB/SpiR (SsrA) and Pir at transcriptional and post-transcriptional levels respectively. Promotes expression of the two-component regulatory system PmrA/PmrB via activation of pmrD gene. Is required to attenuate bacterial growth within fibroblast cells and to enhance bacterial resistance to bile in intestinal cells. Negatively regulates prgH, which is required for invasion of epithelial cells. PhoP uses multiple mechanisms to promote transcription and activates promoters for PAG at low (uM range) Mg(2+) concentrations. Probably involved in acid tolerance.</text>
</comment>
<comment type="subunit">
    <text evidence="1">Monomer in the inactive, unphosphorylated state and dimer in the active, phosphorylated state.</text>
</comment>
<comment type="subcellular location">
    <subcellularLocation>
        <location evidence="10">Cytoplasm</location>
    </subcellularLocation>
</comment>
<comment type="induction">
    <text evidence="6 8">The phoP/phoQ operon is positively autoregulated by both PhoP and PhoQ in a Mg(2+)-dependent manner. Repressed by RcsB via sigma factor RpoS. Induced by antimicrobial peptides (similar to those in macrophages) and low Mg(2+) concentrations.</text>
</comment>
<comment type="PTM">
    <text evidence="8">Phosphorylated by PhoQ.</text>
</comment>
<comment type="miscellaneous">
    <text>PhoP/PhoQ-signaling cascade, which activated virulence membrane proteins (PagC, PagO, PagD, PagK, PgtE and PhoN), is induced by cationic antimicrobial peptides (CAMP) (polymyxin, alpha-helical peptide C18G and sheet peptide protegrin-1) at sublethal concentrations.</text>
</comment>
<protein>
    <recommendedName>
        <fullName>Virulence transcriptional regulatory protein PhoP</fullName>
    </recommendedName>
</protein>